<keyword id="KW-0131">Cell cycle</keyword>
<keyword id="KW-0132">Cell division</keyword>
<keyword id="KW-0997">Cell inner membrane</keyword>
<keyword id="KW-1003">Cell membrane</keyword>
<keyword id="KW-0133">Cell shape</keyword>
<keyword id="KW-0961">Cell wall biogenesis/degradation</keyword>
<keyword id="KW-0460">Magnesium</keyword>
<keyword id="KW-0472">Membrane</keyword>
<keyword id="KW-0479">Metal-binding</keyword>
<keyword id="KW-0573">Peptidoglycan synthesis</keyword>
<keyword id="KW-0808">Transferase</keyword>
<keyword id="KW-0812">Transmembrane</keyword>
<keyword id="KW-1133">Transmembrane helix</keyword>
<proteinExistence type="inferred from homology"/>
<organism>
    <name type="scientific">Chlorobaculum parvum (strain DSM 263 / NCIMB 8327)</name>
    <name type="common">Chlorobium vibrioforme subsp. thiosulfatophilum</name>
    <dbReference type="NCBI Taxonomy" id="517417"/>
    <lineage>
        <taxon>Bacteria</taxon>
        <taxon>Pseudomonadati</taxon>
        <taxon>Chlorobiota</taxon>
        <taxon>Chlorobiia</taxon>
        <taxon>Chlorobiales</taxon>
        <taxon>Chlorobiaceae</taxon>
        <taxon>Chlorobaculum</taxon>
    </lineage>
</organism>
<reference key="1">
    <citation type="submission" date="2008-06" db="EMBL/GenBank/DDBJ databases">
        <title>Complete sequence of Chlorobaculum parvum NCIB 8327.</title>
        <authorList>
            <consortium name="US DOE Joint Genome Institute"/>
            <person name="Lucas S."/>
            <person name="Copeland A."/>
            <person name="Lapidus A."/>
            <person name="Glavina del Rio T."/>
            <person name="Dalin E."/>
            <person name="Tice H."/>
            <person name="Bruce D."/>
            <person name="Goodwin L."/>
            <person name="Pitluck S."/>
            <person name="Schmutz J."/>
            <person name="Larimer F."/>
            <person name="Land M."/>
            <person name="Hauser L."/>
            <person name="Kyrpides N."/>
            <person name="Mikhailova N."/>
            <person name="Zhao F."/>
            <person name="Li T."/>
            <person name="Liu Z."/>
            <person name="Overmann J."/>
            <person name="Bryant D.A."/>
            <person name="Richardson P."/>
        </authorList>
    </citation>
    <scope>NUCLEOTIDE SEQUENCE [LARGE SCALE GENOMIC DNA]</scope>
    <source>
        <strain>DSM 263 / NCIMB 8327</strain>
    </source>
</reference>
<feature type="chain" id="PRO_1000090607" description="Phospho-N-acetylmuramoyl-pentapeptide-transferase">
    <location>
        <begin position="1"/>
        <end position="368"/>
    </location>
</feature>
<feature type="transmembrane region" description="Helical" evidence="1">
    <location>
        <begin position="30"/>
        <end position="50"/>
    </location>
</feature>
<feature type="transmembrane region" description="Helical" evidence="1">
    <location>
        <begin position="72"/>
        <end position="92"/>
    </location>
</feature>
<feature type="transmembrane region" description="Helical" evidence="1">
    <location>
        <begin position="98"/>
        <end position="118"/>
    </location>
</feature>
<feature type="transmembrane region" description="Helical" evidence="1">
    <location>
        <begin position="139"/>
        <end position="159"/>
    </location>
</feature>
<feature type="transmembrane region" description="Helical" evidence="1">
    <location>
        <begin position="170"/>
        <end position="190"/>
    </location>
</feature>
<feature type="transmembrane region" description="Helical" evidence="1">
    <location>
        <begin position="201"/>
        <end position="221"/>
    </location>
</feature>
<feature type="transmembrane region" description="Helical" evidence="1">
    <location>
        <begin position="238"/>
        <end position="258"/>
    </location>
</feature>
<feature type="transmembrane region" description="Helical" evidence="1">
    <location>
        <begin position="262"/>
        <end position="284"/>
    </location>
</feature>
<feature type="transmembrane region" description="Helical" evidence="1">
    <location>
        <begin position="345"/>
        <end position="365"/>
    </location>
</feature>
<comment type="function">
    <text evidence="1">Catalyzes the initial step of the lipid cycle reactions in the biosynthesis of the cell wall peptidoglycan: transfers peptidoglycan precursor phospho-MurNAc-pentapeptide from UDP-MurNAc-pentapeptide onto the lipid carrier undecaprenyl phosphate, yielding undecaprenyl-pyrophosphoryl-MurNAc-pentapeptide, known as lipid I.</text>
</comment>
<comment type="catalytic activity">
    <reaction evidence="1">
        <text>UDP-N-acetyl-alpha-D-muramoyl-L-alanyl-gamma-D-glutamyl-meso-2,6-diaminopimeloyl-D-alanyl-D-alanine + di-trans,octa-cis-undecaprenyl phosphate = di-trans,octa-cis-undecaprenyl diphospho-N-acetyl-alpha-D-muramoyl-L-alanyl-D-glutamyl-meso-2,6-diaminopimeloyl-D-alanyl-D-alanine + UMP</text>
        <dbReference type="Rhea" id="RHEA:28386"/>
        <dbReference type="ChEBI" id="CHEBI:57865"/>
        <dbReference type="ChEBI" id="CHEBI:60392"/>
        <dbReference type="ChEBI" id="CHEBI:61386"/>
        <dbReference type="ChEBI" id="CHEBI:61387"/>
        <dbReference type="EC" id="2.7.8.13"/>
    </reaction>
</comment>
<comment type="cofactor">
    <cofactor evidence="1">
        <name>Mg(2+)</name>
        <dbReference type="ChEBI" id="CHEBI:18420"/>
    </cofactor>
</comment>
<comment type="pathway">
    <text evidence="1">Cell wall biogenesis; peptidoglycan biosynthesis.</text>
</comment>
<comment type="subcellular location">
    <subcellularLocation>
        <location evidence="1">Cell inner membrane</location>
        <topology evidence="1">Multi-pass membrane protein</topology>
    </subcellularLocation>
</comment>
<comment type="similarity">
    <text evidence="1">Belongs to the glycosyltransferase 4 family. MraY subfamily.</text>
</comment>
<name>MRAY_CHLP8</name>
<gene>
    <name evidence="1" type="primary">mraY</name>
    <name type="ordered locus">Cpar_2067</name>
</gene>
<dbReference type="EC" id="2.7.8.13" evidence="1"/>
<dbReference type="EMBL" id="CP001099">
    <property type="protein sequence ID" value="ACF12453.1"/>
    <property type="molecule type" value="Genomic_DNA"/>
</dbReference>
<dbReference type="RefSeq" id="WP_012503286.1">
    <property type="nucleotide sequence ID" value="NC_011027.1"/>
</dbReference>
<dbReference type="SMR" id="B3QLW7"/>
<dbReference type="STRING" id="517417.Cpar_2067"/>
<dbReference type="KEGG" id="cpc:Cpar_2067"/>
<dbReference type="eggNOG" id="COG0472">
    <property type="taxonomic scope" value="Bacteria"/>
</dbReference>
<dbReference type="HOGENOM" id="CLU_023982_0_0_10"/>
<dbReference type="OrthoDB" id="9805475at2"/>
<dbReference type="UniPathway" id="UPA00219"/>
<dbReference type="Proteomes" id="UP000008811">
    <property type="component" value="Chromosome"/>
</dbReference>
<dbReference type="GO" id="GO:0005886">
    <property type="term" value="C:plasma membrane"/>
    <property type="evidence" value="ECO:0007669"/>
    <property type="project" value="UniProtKB-SubCell"/>
</dbReference>
<dbReference type="GO" id="GO:0046872">
    <property type="term" value="F:metal ion binding"/>
    <property type="evidence" value="ECO:0007669"/>
    <property type="project" value="UniProtKB-KW"/>
</dbReference>
<dbReference type="GO" id="GO:0008963">
    <property type="term" value="F:phospho-N-acetylmuramoyl-pentapeptide-transferase activity"/>
    <property type="evidence" value="ECO:0007669"/>
    <property type="project" value="UniProtKB-UniRule"/>
</dbReference>
<dbReference type="GO" id="GO:0051992">
    <property type="term" value="F:UDP-N-acetylmuramoyl-L-alanyl-D-glutamyl-meso-2,6-diaminopimelyl-D-alanyl-D-alanine:undecaprenyl-phosphate transferase activity"/>
    <property type="evidence" value="ECO:0007669"/>
    <property type="project" value="RHEA"/>
</dbReference>
<dbReference type="GO" id="GO:0051301">
    <property type="term" value="P:cell division"/>
    <property type="evidence" value="ECO:0007669"/>
    <property type="project" value="UniProtKB-KW"/>
</dbReference>
<dbReference type="GO" id="GO:0071555">
    <property type="term" value="P:cell wall organization"/>
    <property type="evidence" value="ECO:0007669"/>
    <property type="project" value="UniProtKB-KW"/>
</dbReference>
<dbReference type="GO" id="GO:0009252">
    <property type="term" value="P:peptidoglycan biosynthetic process"/>
    <property type="evidence" value="ECO:0007669"/>
    <property type="project" value="UniProtKB-UniRule"/>
</dbReference>
<dbReference type="GO" id="GO:0008360">
    <property type="term" value="P:regulation of cell shape"/>
    <property type="evidence" value="ECO:0007669"/>
    <property type="project" value="UniProtKB-KW"/>
</dbReference>
<dbReference type="CDD" id="cd06852">
    <property type="entry name" value="GT_MraY"/>
    <property type="match status" value="1"/>
</dbReference>
<dbReference type="HAMAP" id="MF_00038">
    <property type="entry name" value="MraY"/>
    <property type="match status" value="1"/>
</dbReference>
<dbReference type="InterPro" id="IPR000715">
    <property type="entry name" value="Glycosyl_transferase_4"/>
</dbReference>
<dbReference type="InterPro" id="IPR003524">
    <property type="entry name" value="PNAcMuramoyl-5peptid_Trfase"/>
</dbReference>
<dbReference type="InterPro" id="IPR018480">
    <property type="entry name" value="PNAcMuramoyl-5peptid_Trfase_CS"/>
</dbReference>
<dbReference type="NCBIfam" id="TIGR00445">
    <property type="entry name" value="mraY"/>
    <property type="match status" value="1"/>
</dbReference>
<dbReference type="PANTHER" id="PTHR22926">
    <property type="entry name" value="PHOSPHO-N-ACETYLMURAMOYL-PENTAPEPTIDE-TRANSFERASE"/>
    <property type="match status" value="1"/>
</dbReference>
<dbReference type="PANTHER" id="PTHR22926:SF5">
    <property type="entry name" value="PHOSPHO-N-ACETYLMURAMOYL-PENTAPEPTIDE-TRANSFERASE HOMOLOG"/>
    <property type="match status" value="1"/>
</dbReference>
<dbReference type="Pfam" id="PF00953">
    <property type="entry name" value="Glycos_transf_4"/>
    <property type="match status" value="1"/>
</dbReference>
<dbReference type="PROSITE" id="PS01347">
    <property type="entry name" value="MRAY_1"/>
    <property type="match status" value="1"/>
</dbReference>
<dbReference type="PROSITE" id="PS01348">
    <property type="entry name" value="MRAY_2"/>
    <property type="match status" value="1"/>
</dbReference>
<sequence length="368" mass="40848">MLYYFLRYINEMFNPPGMRVIEYLTFRASAAAITALLITVFAGPSFIRFLKSHFLEPVKEEAPEEHRKKKDVPTMGGLLIILAVEISALLWAKVDDPHVWLIMLAVLWMGLIGFIDDYRKVVLKIKGGLAGKYKLVGQVALGLVVGFYTWNDPAFSVLLSKTSVPFLKNFSVDYGIFYIPVVIFIITAVSNAVNLTDGLDGLAAGNAAIVTMALGLFAYLGGNAVYAGYLSIPFISGAGEIAVVSMAIVMACVGFLWFNSNPAEVFMGDTGSLALGSAIAVIALMIKQELLLPVLAGIFFIETLSVSMQVAWFKFTKWRFKEGRRIFLMAPLHHHFQLKGWPEQKIVIRFWIISILLFLTSLMTLKLR</sequence>
<accession>B3QLW7</accession>
<evidence type="ECO:0000255" key="1">
    <source>
        <dbReference type="HAMAP-Rule" id="MF_00038"/>
    </source>
</evidence>
<protein>
    <recommendedName>
        <fullName evidence="1">Phospho-N-acetylmuramoyl-pentapeptide-transferase</fullName>
        <ecNumber evidence="1">2.7.8.13</ecNumber>
    </recommendedName>
    <alternativeName>
        <fullName evidence="1">UDP-MurNAc-pentapeptide phosphotransferase</fullName>
    </alternativeName>
</protein>